<accession>G5ECD6</accession>
<proteinExistence type="evidence at protein level"/>
<dbReference type="EC" id="2.4.1.16" evidence="9 10"/>
<dbReference type="EMBL" id="AY874871">
    <property type="protein sequence ID" value="AAX62732.1"/>
    <property type="molecule type" value="mRNA"/>
</dbReference>
<dbReference type="EMBL" id="BX284601">
    <property type="protein sequence ID" value="CAA96688.2"/>
    <property type="molecule type" value="Genomic_DNA"/>
</dbReference>
<dbReference type="PIR" id="T25284">
    <property type="entry name" value="T25284"/>
</dbReference>
<dbReference type="RefSeq" id="NP_492113.2">
    <property type="nucleotide sequence ID" value="NM_059712.6"/>
</dbReference>
<dbReference type="FunCoup" id="G5ECD6">
    <property type="interactions" value="38"/>
</dbReference>
<dbReference type="STRING" id="6239.T25G3.2.1"/>
<dbReference type="CAZy" id="GT2">
    <property type="family name" value="Glycosyltransferase Family 2"/>
</dbReference>
<dbReference type="GlyCosmos" id="G5ECD6">
    <property type="glycosylation" value="1 site, No reported glycans"/>
</dbReference>
<dbReference type="PaxDb" id="6239-T25G3.2.1"/>
<dbReference type="PeptideAtlas" id="G5ECD6"/>
<dbReference type="EnsemblMetazoa" id="T25G3.2.1">
    <property type="protein sequence ID" value="T25G3.2.1"/>
    <property type="gene ID" value="WBGene00000496"/>
</dbReference>
<dbReference type="EnsemblMetazoa" id="T25G3.2.2">
    <property type="protein sequence ID" value="T25G3.2.2"/>
    <property type="gene ID" value="WBGene00000496"/>
</dbReference>
<dbReference type="GeneID" id="172508"/>
<dbReference type="KEGG" id="cel:CELE_T25G3.2"/>
<dbReference type="AGR" id="WB:WBGene00000496"/>
<dbReference type="CTD" id="172508"/>
<dbReference type="WormBase" id="T25G3.2">
    <property type="protein sequence ID" value="CE39183"/>
    <property type="gene ID" value="WBGene00000496"/>
    <property type="gene designation" value="chs-1"/>
</dbReference>
<dbReference type="eggNOG" id="KOG2571">
    <property type="taxonomic scope" value="Eukaryota"/>
</dbReference>
<dbReference type="HOGENOM" id="CLU_004002_0_0_1"/>
<dbReference type="InParanoid" id="G5ECD6"/>
<dbReference type="OMA" id="FLMIPCT"/>
<dbReference type="OrthoDB" id="370884at2759"/>
<dbReference type="PhylomeDB" id="G5ECD6"/>
<dbReference type="PRO" id="PR:G5ECD6"/>
<dbReference type="Proteomes" id="UP000001940">
    <property type="component" value="Chromosome I"/>
</dbReference>
<dbReference type="Bgee" id="WBGene00000496">
    <property type="expression patterns" value="Expressed in germ line (C elegans) and 3 other cell types or tissues"/>
</dbReference>
<dbReference type="GO" id="GO:0005938">
    <property type="term" value="C:cell cortex"/>
    <property type="evidence" value="ECO:0000314"/>
    <property type="project" value="WormBase"/>
</dbReference>
<dbReference type="GO" id="GO:0005886">
    <property type="term" value="C:plasma membrane"/>
    <property type="evidence" value="ECO:0000314"/>
    <property type="project" value="UniProtKB"/>
</dbReference>
<dbReference type="GO" id="GO:0004100">
    <property type="term" value="F:chitin synthase activity"/>
    <property type="evidence" value="ECO:0000250"/>
    <property type="project" value="WormBase"/>
</dbReference>
<dbReference type="GO" id="GO:0006031">
    <property type="term" value="P:chitin biosynthetic process"/>
    <property type="evidence" value="ECO:0000315"/>
    <property type="project" value="UniProtKB"/>
</dbReference>
<dbReference type="GO" id="GO:0030703">
    <property type="term" value="P:eggshell formation"/>
    <property type="evidence" value="ECO:0000315"/>
    <property type="project" value="UniProtKB"/>
</dbReference>
<dbReference type="GO" id="GO:1904778">
    <property type="term" value="P:positive regulation of protein localization to cell cortex"/>
    <property type="evidence" value="ECO:0000315"/>
    <property type="project" value="UniProtKB"/>
</dbReference>
<dbReference type="CDD" id="cd04190">
    <property type="entry name" value="Chitin_synth_C"/>
    <property type="match status" value="1"/>
</dbReference>
<dbReference type="FunFam" id="3.90.550.10:FF:000139">
    <property type="entry name" value="Chitin synthase 8"/>
    <property type="match status" value="1"/>
</dbReference>
<dbReference type="Gene3D" id="3.90.550.10">
    <property type="entry name" value="Spore Coat Polysaccharide Biosynthesis Protein SpsA, Chain A"/>
    <property type="match status" value="1"/>
</dbReference>
<dbReference type="InterPro" id="IPR004835">
    <property type="entry name" value="Chitin_synth"/>
</dbReference>
<dbReference type="InterPro" id="IPR055120">
    <property type="entry name" value="Chs-1/2_IV_N"/>
</dbReference>
<dbReference type="InterPro" id="IPR029044">
    <property type="entry name" value="Nucleotide-diphossugar_trans"/>
</dbReference>
<dbReference type="PANTHER" id="PTHR22914">
    <property type="entry name" value="CHITIN SYNTHASE"/>
    <property type="match status" value="1"/>
</dbReference>
<dbReference type="PANTHER" id="PTHR22914:SF12">
    <property type="entry name" value="CHITIN SYNTHASE CHS-1"/>
    <property type="match status" value="1"/>
</dbReference>
<dbReference type="Pfam" id="PF03142">
    <property type="entry name" value="Chitin_synth_2"/>
    <property type="match status" value="1"/>
</dbReference>
<dbReference type="Pfam" id="PF23000">
    <property type="entry name" value="ChitinSynthase_IV_N"/>
    <property type="match status" value="1"/>
</dbReference>
<dbReference type="SUPFAM" id="SSF53448">
    <property type="entry name" value="Nucleotide-diphospho-sugar transferases"/>
    <property type="match status" value="1"/>
</dbReference>
<sequence length="1322" mass="151056">MNDGENYWNAFRSHKRSATDGPTLSPWMVTVLQATKLLLFALCNIVLTLGSVFSKLIVLIMATNIVPRAHLIGKFARKCTKAAVRRTSTTTAGIYLSLLLIQCFPDTINLIRSGIDMWKGQCGQLVKSVVVLESLRAIGLAVLSFHVFPQLDLARCLVLSACFPLVAVLQRSLVAMVSAARTGRSFRNRLGRCFVAIPHVIMFLVLMSSCYVWALFDNKFTAIIALPIGVICTSAGFWESWIDTTHSGTSFDELYRLKYAVRKMNTTTKLIVSLMRIVCTVSVLVSAVYINDHKKLNSSHFVKAFFSFSTRQPHTRLLLLATGIIVLHFVMRGISRFLAALDLHPFSFVHPLSIAPLIAYGYVRYACQSPTCSIARRLARFGLHWVCDQWFQSARGIASPDFYICLIWLLVGCYRGWRLVRQRYFDTNEEIISSMPPVCNGLCIEQSLVVFQHSLNRQEKTMLTEEEDISDENDELRIRNDEVDRVSTVYGCATMWHETETEMRQVLRSILKLDVDHATRMNNKKANELRYRLEGHIFFDDAWEDVEEDGIEKRQPNEYFNMFFDLLNEMTGERLNEEGKMETRILVNTPYGGRLVVKLPSGTLLFVHLKDKKMIRHKKRWSQVMYMYYLLGHRIMDCPLSIEDRQQMADNTFILAIDGDSKFEPDALLRLLHLMNAKSDIGCACGRIHPIGNGIMVWYQKFEYAIAHWFQKAAEHVFGCVLCAPGCFSLFRASALMDDNIMHKYTKTASEPRHYVQYDQGEDRWLSTLLLKQGYRIEYAAASDAETYAPEGFEEFFNQRRRWTPSSIANTVDLLMDYKRASENNDAISYAYIAYQFLVIFFSMLGPAIIFTMLVFAQVAAFELRGSDVMLYNGIPIGFFIVLCFTTESNIQLIYAKYMSIAYAFVMLAVLVATSSQIVLETVLAPTSLFIVTMVGIFFFAACLHPKEFTNIIHGVVFFLMIPSTYVFLTLYSLINLNVITWGTREAVAKATGQKTKKAPMEQFIDRVIDIVKKGFRLISCREKKEHEERREKMEKKMQRMELALRSIESGADVKKILDATEEKEKREEETQTADFPIEENVEKTQKEIQKANRYVWMTSHSLKVCERGKLKSAEKVFWNELINAYLKPIKTTPAEMKAVAEGLASLRNQIAFTILLVNSLLALAIFLIQKHKNVLSIKFSPIKNFRWTKMNEMTGQYEETDEPLKIDPLGMGIVVFLLIILFVQTLGMLLHRLNTMIGAFQEVKNLYEYGVSPVINTKNDDERIMNNARLMINSLGVSTGHAADGYTRHRGEESDTGNVLYKLQKARLAKRMQRSALSTTE</sequence>
<comment type="function">
    <text evidence="4 6">Essential for the embryonic synthesis of chitin, a component of the eggshell.</text>
</comment>
<comment type="catalytic activity">
    <reaction evidence="9 10">
        <text>[(1-&gt;4)-N-acetyl-beta-D-glucosaminyl](n) + UDP-N-acetyl-alpha-D-glucosamine = [(1-&gt;4)-N-acetyl-beta-D-glucosaminyl](n+1) + UDP + H(+)</text>
        <dbReference type="Rhea" id="RHEA:16637"/>
        <dbReference type="Rhea" id="RHEA-COMP:9593"/>
        <dbReference type="Rhea" id="RHEA-COMP:9595"/>
        <dbReference type="ChEBI" id="CHEBI:15378"/>
        <dbReference type="ChEBI" id="CHEBI:17029"/>
        <dbReference type="ChEBI" id="CHEBI:57705"/>
        <dbReference type="ChEBI" id="CHEBI:58223"/>
        <dbReference type="EC" id="2.4.1.16"/>
    </reaction>
</comment>
<comment type="subcellular location">
    <subcellularLocation>
        <location evidence="5 6">Cell membrane</location>
        <topology evidence="1">Multi-pass membrane protein</topology>
    </subcellularLocation>
    <text evidence="5 6">egg-1, egg-2 and egg-3 maintain the homogenous distribution of chs-1 at the unfertilized oocyte cell membrane, thus ensuring the formation of a continuous and cohesive eggshell chitin layer (PubMed:17869112, PubMed:20971008). In the fertilized embryo, co-localizes with egg-3 to cytoplasmic foci in an egg-3-dependent manner (PubMed:17869112).</text>
</comment>
<comment type="developmental stage">
    <text evidence="3">Expressed at L3-L4 larval stages and in adults.</text>
</comment>
<comment type="disruption phenotype">
    <text evidence="4 5 6">RNAi-mediated knockdown causes the production of abnormal eggs characterized by a spherical morphology, the absence of the eggshell chitin layer, increased permeability to small molecules and a failure to divide (PubMed:16098962). Loss of polar body formation and loss of egg-3 and mbk-2 cortical localization in oocytes (PubMed:17869112). RNAi-mediated knockdown causes polyspermy in 40 percent of animals and a failure to internalize egg-1 after oocyte fertilization (PubMed:20971008). Simultaneous RNAi-mediated knockdown with mat-1 prevents the formation of the eggshell chitin layer (PubMed:20971008).</text>
</comment>
<comment type="similarity">
    <text evidence="8">Belongs to the chitin synthase family. Class IV subfamily.</text>
</comment>
<feature type="chain" id="PRO_0000443248" description="Chitin synthase chs-1">
    <location>
        <begin position="1"/>
        <end position="1322"/>
    </location>
</feature>
<feature type="topological domain" description="Extracellular" evidence="8">
    <location>
        <begin position="1"/>
        <end position="39"/>
    </location>
</feature>
<feature type="transmembrane region" description="Helical" evidence="1">
    <location>
        <begin position="40"/>
        <end position="60"/>
    </location>
</feature>
<feature type="topological domain" description="Cytoplasmic" evidence="8">
    <location>
        <begin position="61"/>
        <end position="128"/>
    </location>
</feature>
<feature type="transmembrane region" description="Helical" evidence="1">
    <location>
        <begin position="129"/>
        <end position="149"/>
    </location>
</feature>
<feature type="topological domain" description="Extracellular" evidence="8">
    <location>
        <begin position="150"/>
        <end position="156"/>
    </location>
</feature>
<feature type="transmembrane region" description="Helical" evidence="1">
    <location>
        <begin position="157"/>
        <end position="177"/>
    </location>
</feature>
<feature type="topological domain" description="Cytoplasmic" evidence="8">
    <location>
        <begin position="178"/>
        <end position="193"/>
    </location>
</feature>
<feature type="transmembrane region" description="Helical" evidence="1">
    <location>
        <begin position="194"/>
        <end position="214"/>
    </location>
</feature>
<feature type="topological domain" description="Extracellular" evidence="8">
    <location>
        <begin position="215"/>
        <end position="221"/>
    </location>
</feature>
<feature type="transmembrane region" description="Helical" evidence="1">
    <location>
        <begin position="222"/>
        <end position="242"/>
    </location>
</feature>
<feature type="topological domain" description="Cytoplasmic" evidence="8">
    <location>
        <begin position="243"/>
        <end position="269"/>
    </location>
</feature>
<feature type="transmembrane region" description="Helical" evidence="1">
    <location>
        <begin position="270"/>
        <end position="290"/>
    </location>
</feature>
<feature type="topological domain" description="Extracellular" evidence="8">
    <location>
        <begin position="291"/>
        <end position="316"/>
    </location>
</feature>
<feature type="transmembrane region" description="Helical" evidence="1">
    <location>
        <begin position="317"/>
        <end position="337"/>
    </location>
</feature>
<feature type="topological domain" description="Cytoplasmic" evidence="8">
    <location>
        <begin position="338"/>
        <end position="342"/>
    </location>
</feature>
<feature type="transmembrane region" description="Helical" evidence="1">
    <location>
        <begin position="343"/>
        <end position="363"/>
    </location>
</feature>
<feature type="topological domain" description="Extracellular" evidence="8">
    <location>
        <begin position="364"/>
        <end position="396"/>
    </location>
</feature>
<feature type="transmembrane region" description="Helical" evidence="1">
    <location>
        <begin position="397"/>
        <end position="417"/>
    </location>
</feature>
<feature type="topological domain" description="Cytoplasmic" evidence="8">
    <location>
        <begin position="418"/>
        <end position="836"/>
    </location>
</feature>
<feature type="transmembrane region" description="Helical" evidence="1">
    <location>
        <begin position="837"/>
        <end position="857"/>
    </location>
</feature>
<feature type="topological domain" description="Extracellular" evidence="8">
    <location>
        <begin position="858"/>
        <end position="865"/>
    </location>
</feature>
<feature type="transmembrane region" description="Helical" evidence="1">
    <location>
        <begin position="866"/>
        <end position="886"/>
    </location>
</feature>
<feature type="topological domain" description="Cytoplasmic" evidence="8">
    <location>
        <begin position="887"/>
        <end position="892"/>
    </location>
</feature>
<feature type="transmembrane region" description="Helical" evidence="1">
    <location>
        <begin position="893"/>
        <end position="913"/>
    </location>
</feature>
<feature type="topological domain" description="Extracellular" evidence="8">
    <location>
        <begin position="914"/>
        <end position="922"/>
    </location>
</feature>
<feature type="transmembrane region" description="Helical" evidence="1">
    <location>
        <begin position="923"/>
        <end position="943"/>
    </location>
</feature>
<feature type="topological domain" description="Cytoplasmic" evidence="8">
    <location>
        <begin position="944"/>
        <end position="951"/>
    </location>
</feature>
<feature type="transmembrane region" description="Helical" evidence="1">
    <location>
        <begin position="952"/>
        <end position="972"/>
    </location>
</feature>
<feature type="topological domain" description="Extracellular" evidence="8">
    <location>
        <begin position="973"/>
        <end position="1148"/>
    </location>
</feature>
<feature type="transmembrane region" description="Helical" evidence="1">
    <location>
        <begin position="1149"/>
        <end position="1169"/>
    </location>
</feature>
<feature type="topological domain" description="Cytoplasmic" evidence="8">
    <location>
        <begin position="1170"/>
        <end position="1209"/>
    </location>
</feature>
<feature type="transmembrane region" description="Helical" evidence="1">
    <location>
        <begin position="1210"/>
        <end position="1230"/>
    </location>
</feature>
<feature type="topological domain" description="Extracellular" evidence="8">
    <location>
        <begin position="1231"/>
        <end position="1322"/>
    </location>
</feature>
<feature type="coiled-coil region" evidence="1">
    <location>
        <begin position="455"/>
        <end position="486"/>
    </location>
</feature>
<feature type="coiled-coil region" evidence="1">
    <location>
        <begin position="1019"/>
        <end position="1053"/>
    </location>
</feature>
<feature type="glycosylation site" description="N-linked (GlcNAc...) asparagine" evidence="2">
    <location>
        <position position="297"/>
    </location>
</feature>
<protein>
    <recommendedName>
        <fullName evidence="8">Chitin synthase chs-1</fullName>
        <ecNumber evidence="9 10">2.4.1.16</ecNumber>
    </recommendedName>
    <alternativeName>
        <fullName evidence="8">Chitin-UDP acetyl-glucosaminyl transferase chs-1</fullName>
    </alternativeName>
</protein>
<gene>
    <name evidence="7 13" type="primary">chs-1</name>
    <name evidence="13" type="ORF">T25G3.2</name>
</gene>
<evidence type="ECO:0000255" key="1"/>
<evidence type="ECO:0000255" key="2">
    <source>
        <dbReference type="PROSITE-ProRule" id="PRU00498"/>
    </source>
</evidence>
<evidence type="ECO:0000269" key="3">
    <source>
    </source>
</evidence>
<evidence type="ECO:0000269" key="4">
    <source>
    </source>
</evidence>
<evidence type="ECO:0000269" key="5">
    <source>
    </source>
</evidence>
<evidence type="ECO:0000269" key="6">
    <source>
    </source>
</evidence>
<evidence type="ECO:0000303" key="7">
    <source>
    </source>
</evidence>
<evidence type="ECO:0000305" key="8"/>
<evidence type="ECO:0000305" key="9">
    <source>
    </source>
</evidence>
<evidence type="ECO:0000305" key="10">
    <source>
    </source>
</evidence>
<evidence type="ECO:0000312" key="11">
    <source>
        <dbReference type="EMBL" id="AAX62732.1"/>
    </source>
</evidence>
<evidence type="ECO:0000312" key="12">
    <source>
        <dbReference type="Proteomes" id="UP000001940"/>
    </source>
</evidence>
<evidence type="ECO:0000312" key="13">
    <source>
        <dbReference type="WormBase" id="T25G3.2"/>
    </source>
</evidence>
<organism evidence="12">
    <name type="scientific">Caenorhabditis elegans</name>
    <dbReference type="NCBI Taxonomy" id="6239"/>
    <lineage>
        <taxon>Eukaryota</taxon>
        <taxon>Metazoa</taxon>
        <taxon>Ecdysozoa</taxon>
        <taxon>Nematoda</taxon>
        <taxon>Chromadorea</taxon>
        <taxon>Rhabditida</taxon>
        <taxon>Rhabditina</taxon>
        <taxon>Rhabditomorpha</taxon>
        <taxon>Rhabditoidea</taxon>
        <taxon>Rhabditidae</taxon>
        <taxon>Peloderinae</taxon>
        <taxon>Caenorhabditis</taxon>
    </lineage>
</organism>
<name>CHS1_CAEEL</name>
<keyword id="KW-1003">Cell membrane</keyword>
<keyword id="KW-0175">Coiled coil</keyword>
<keyword id="KW-0325">Glycoprotein</keyword>
<keyword id="KW-0328">Glycosyltransferase</keyword>
<keyword id="KW-0472">Membrane</keyword>
<keyword id="KW-1185">Reference proteome</keyword>
<keyword id="KW-0808">Transferase</keyword>
<keyword id="KW-0812">Transmembrane</keyword>
<keyword id="KW-1133">Transmembrane helix</keyword>
<reference evidence="11" key="1">
    <citation type="journal article" date="2005" name="Dev. Biol.">
        <title>The chitin synthase genes chs-1 and chs-2 are essential for C. elegans development and responsible for chitin deposition in the eggshell and pharynx, respectively.</title>
        <authorList>
            <person name="Zhang Y."/>
            <person name="Foster J.M."/>
            <person name="Nelson L.S."/>
            <person name="Ma D."/>
            <person name="Carlow C.K."/>
        </authorList>
    </citation>
    <scope>NUCLEOTIDE SEQUENCE [MRNA]</scope>
    <scope>FUNCTION</scope>
    <scope>CATALYTIC ACTIVITY</scope>
    <scope>DISRUPTION PHENOTYPE</scope>
    <source>
        <strain evidence="11">Bristol N2</strain>
    </source>
</reference>
<reference evidence="12" key="2">
    <citation type="journal article" date="1998" name="Science">
        <title>Genome sequence of the nematode C. elegans: a platform for investigating biology.</title>
        <authorList>
            <consortium name="The C. elegans sequencing consortium"/>
        </authorList>
    </citation>
    <scope>NUCLEOTIDE SEQUENCE [LARGE SCALE GENOMIC DNA]</scope>
    <source>
        <strain evidence="12">Bristol N2</strain>
    </source>
</reference>
<reference evidence="8" key="3">
    <citation type="journal article" date="2001" name="Mol. Genet. Genomics">
        <title>Nematode chitin synthases: gene structure, expression and function in Caenorhabditis elegans and the plant parasitic nematode Meloidogyne artiellia.</title>
        <authorList>
            <person name="Veronico P."/>
            <person name="Gray L.J."/>
            <person name="Jones J.T."/>
            <person name="Bazzicalupo P."/>
            <person name="Arbucci S."/>
            <person name="Cortese M.R."/>
            <person name="Di Vito M."/>
            <person name="De Giorgi C."/>
        </authorList>
    </citation>
    <scope>DEVELOPMENTAL STAGE</scope>
</reference>
<reference evidence="8" key="4">
    <citation type="journal article" date="2007" name="Curr. Biol.">
        <title>EGG-3 regulates cell-surface and cortex rearrangements during egg activation in Caenorhabditis elegans.</title>
        <authorList>
            <person name="Maruyama R."/>
            <person name="Velarde N.V."/>
            <person name="Klancer R."/>
            <person name="Gordon S."/>
            <person name="Kadandale P."/>
            <person name="Parry J.M."/>
            <person name="Hang J.S."/>
            <person name="Rubin J."/>
            <person name="Stewart-Michaelis A."/>
            <person name="Schweinsberg P."/>
            <person name="Grant B.D."/>
            <person name="Piano F."/>
            <person name="Sugimoto A."/>
            <person name="Singson A."/>
        </authorList>
    </citation>
    <scope>SUBCELLULAR LOCATION</scope>
    <scope>DISRUPTION PHENOTYPE</scope>
</reference>
<reference evidence="8" key="5">
    <citation type="journal article" date="2010" name="Curr. Biol.">
        <title>Eggshell chitin and chitin-interacting proteins prevent polyspermy in C. elegans.</title>
        <authorList>
            <person name="Johnston W.L."/>
            <person name="Krizus A."/>
            <person name="Dennis J.W."/>
        </authorList>
    </citation>
    <scope>FUNCTION</scope>
    <scope>CATALYTIC ACTIVITY</scope>
    <scope>SUBCELLULAR LOCATION</scope>
    <scope>DISRUPTION PHENOTYPE</scope>
</reference>